<sequence length="643" mass="72228">MLLGASLVGVLLFSKLVLKLPWTQVGFSLLFLYLGSGGWRFIRVFIKTIRRDIFGGLVLLKVKAKVRQCLRERRTVPILFASTVRRHPDKTALIFEGTDTLWTFRQLDEYSSSVANFLQARGLASGDVAAIFMENRNEFVGLWLGMAKLGVEAALINTNLRRDAQLHCLTTSRARALVFGSEMASAICEIHASLDPSLSLFCSGSWEPNAVPTSTEHLDPLLKDAPKHLPICPDKGFTDKLFYIYTSGTTGLPKAAIVVHSRYYRMAALVYYGFRMRPNDIVYDCLPLYHSAGNIVGIGQCLLHGMTVVIRKKFSASRFWDDCIKYNCTIVQYIGELCRYLLNQPPREAENQHQVRMALGNGLRQSIWTNFSSRFHIPQVAEFYGATECNCSLGNFDSQVGACGFNSRILSFVYPIRLVRVNEDTMELIRGPDGICIPCQPGEPGQLVGRIIQKDPLRRFDGYLNQGANDKKIAKDVFKKGDQAYLTGDVLVMDELGYLYFRDRTGDTFRWKGENVSTTEVEGTLSRLLDMADVAVYGVEVPGTEGRAGMAAVASPTGNCDLERFAQVLEKELPLYARPIFLRLLPELHKTGTYKFQKTELRKEGFDPAIVKDPLFYLDARKGRYVPLDQEAYSRIQAGEEKL</sequence>
<reference key="1">
    <citation type="submission" date="2004-11" db="EMBL/GenBank/DDBJ databases">
        <authorList>
            <consortium name="The German cDNA consortium"/>
        </authorList>
    </citation>
    <scope>NUCLEOTIDE SEQUENCE [LARGE SCALE MRNA]</scope>
    <source>
        <tissue>Kidney</tissue>
    </source>
</reference>
<feature type="chain" id="PRO_0000193212" description="Long-chain fatty acid transport protein 4">
    <location>
        <begin position="1"/>
        <end position="643"/>
    </location>
</feature>
<feature type="transmembrane region" description="Helical" evidence="3">
    <location>
        <begin position="20"/>
        <end position="42"/>
    </location>
</feature>
<feature type="transmembrane region" description="Helical" evidence="3">
    <location>
        <begin position="139"/>
        <end position="156"/>
    </location>
</feature>
<feature type="binding site" evidence="3">
    <location>
        <begin position="243"/>
        <end position="254"/>
    </location>
    <ligand>
        <name>AMP</name>
        <dbReference type="ChEBI" id="CHEBI:456215"/>
    </ligand>
</feature>
<proteinExistence type="evidence at transcript level"/>
<organism>
    <name type="scientific">Pongo abelii</name>
    <name type="common">Sumatran orangutan</name>
    <name type="synonym">Pongo pygmaeus abelii</name>
    <dbReference type="NCBI Taxonomy" id="9601"/>
    <lineage>
        <taxon>Eukaryota</taxon>
        <taxon>Metazoa</taxon>
        <taxon>Chordata</taxon>
        <taxon>Craniata</taxon>
        <taxon>Vertebrata</taxon>
        <taxon>Euteleostomi</taxon>
        <taxon>Mammalia</taxon>
        <taxon>Eutheria</taxon>
        <taxon>Euarchontoglires</taxon>
        <taxon>Primates</taxon>
        <taxon>Haplorrhini</taxon>
        <taxon>Catarrhini</taxon>
        <taxon>Hominidae</taxon>
        <taxon>Pongo</taxon>
    </lineage>
</organism>
<name>S27A4_PONAB</name>
<keyword id="KW-0256">Endoplasmic reticulum</keyword>
<keyword id="KW-0276">Fatty acid metabolism</keyword>
<keyword id="KW-0436">Ligase</keyword>
<keyword id="KW-0443">Lipid metabolism</keyword>
<keyword id="KW-0445">Lipid transport</keyword>
<keyword id="KW-0472">Membrane</keyword>
<keyword id="KW-0547">Nucleotide-binding</keyword>
<keyword id="KW-1185">Reference proteome</keyword>
<keyword id="KW-0812">Transmembrane</keyword>
<keyword id="KW-1133">Transmembrane helix</keyword>
<keyword id="KW-0813">Transport</keyword>
<evidence type="ECO:0000250" key="1">
    <source>
        <dbReference type="UniProtKB" id="Q6P1M0"/>
    </source>
</evidence>
<evidence type="ECO:0000250" key="2">
    <source>
        <dbReference type="UniProtKB" id="Q91VE0"/>
    </source>
</evidence>
<evidence type="ECO:0000255" key="3"/>
<evidence type="ECO:0000305" key="4"/>
<dbReference type="EC" id="6.2.1.15"/>
<dbReference type="EC" id="6.2.1.3"/>
<dbReference type="EC" id="6.2.1.-"/>
<dbReference type="EMBL" id="CR857758">
    <property type="protein sequence ID" value="CAH90023.1"/>
    <property type="molecule type" value="mRNA"/>
</dbReference>
<dbReference type="RefSeq" id="NP_001124962.1">
    <property type="nucleotide sequence ID" value="NM_001131490.1"/>
</dbReference>
<dbReference type="SMR" id="Q5RDY4"/>
<dbReference type="FunCoup" id="Q5RDY4">
    <property type="interactions" value="971"/>
</dbReference>
<dbReference type="STRING" id="9601.ENSPPYP00000022022"/>
<dbReference type="GeneID" id="100171835"/>
<dbReference type="KEGG" id="pon:100171835"/>
<dbReference type="CTD" id="10999"/>
<dbReference type="eggNOG" id="KOG1179">
    <property type="taxonomic scope" value="Eukaryota"/>
</dbReference>
<dbReference type="InParanoid" id="Q5RDY4"/>
<dbReference type="OrthoDB" id="288590at2759"/>
<dbReference type="Proteomes" id="UP000001595">
    <property type="component" value="Unplaced"/>
</dbReference>
<dbReference type="GO" id="GO:0005789">
    <property type="term" value="C:endoplasmic reticulum membrane"/>
    <property type="evidence" value="ECO:0007669"/>
    <property type="project" value="UniProtKB-SubCell"/>
</dbReference>
<dbReference type="GO" id="GO:0005886">
    <property type="term" value="C:plasma membrane"/>
    <property type="evidence" value="ECO:0007669"/>
    <property type="project" value="TreeGrafter"/>
</dbReference>
<dbReference type="GO" id="GO:0047676">
    <property type="term" value="F:arachidonate-CoA ligase activity"/>
    <property type="evidence" value="ECO:0007669"/>
    <property type="project" value="UniProtKB-EC"/>
</dbReference>
<dbReference type="GO" id="GO:0005324">
    <property type="term" value="F:long-chain fatty acid transmembrane transporter activity"/>
    <property type="evidence" value="ECO:0007669"/>
    <property type="project" value="TreeGrafter"/>
</dbReference>
<dbReference type="GO" id="GO:0000166">
    <property type="term" value="F:nucleotide binding"/>
    <property type="evidence" value="ECO:0007669"/>
    <property type="project" value="UniProtKB-KW"/>
</dbReference>
<dbReference type="GO" id="GO:0090434">
    <property type="term" value="F:oleoyl-CoA ligase activity"/>
    <property type="evidence" value="ECO:0007669"/>
    <property type="project" value="TreeGrafter"/>
</dbReference>
<dbReference type="GO" id="GO:0031957">
    <property type="term" value="F:very long-chain fatty acid-CoA ligase activity"/>
    <property type="evidence" value="ECO:0007669"/>
    <property type="project" value="RHEA"/>
</dbReference>
<dbReference type="GO" id="GO:0044539">
    <property type="term" value="P:long-chain fatty acid import into cell"/>
    <property type="evidence" value="ECO:0007669"/>
    <property type="project" value="TreeGrafter"/>
</dbReference>
<dbReference type="GO" id="GO:0001579">
    <property type="term" value="P:medium-chain fatty acid transport"/>
    <property type="evidence" value="ECO:0007669"/>
    <property type="project" value="TreeGrafter"/>
</dbReference>
<dbReference type="CDD" id="cd05939">
    <property type="entry name" value="hsFATP4_like"/>
    <property type="match status" value="1"/>
</dbReference>
<dbReference type="FunFam" id="3.30.300.30:FF:000002">
    <property type="entry name" value="Long-chain fatty acid transport protein 1"/>
    <property type="match status" value="1"/>
</dbReference>
<dbReference type="FunFam" id="3.40.50.12780:FF:000008">
    <property type="entry name" value="Long-chain fatty acid transport protein 4"/>
    <property type="match status" value="1"/>
</dbReference>
<dbReference type="Gene3D" id="3.30.300.30">
    <property type="match status" value="1"/>
</dbReference>
<dbReference type="Gene3D" id="3.40.50.12780">
    <property type="entry name" value="N-terminal domain of ligase-like"/>
    <property type="match status" value="1"/>
</dbReference>
<dbReference type="InterPro" id="IPR025110">
    <property type="entry name" value="AMP-bd_C"/>
</dbReference>
<dbReference type="InterPro" id="IPR045851">
    <property type="entry name" value="AMP-bd_C_sf"/>
</dbReference>
<dbReference type="InterPro" id="IPR020845">
    <property type="entry name" value="AMP-binding_CS"/>
</dbReference>
<dbReference type="InterPro" id="IPR000873">
    <property type="entry name" value="AMP-dep_synth/lig_dom"/>
</dbReference>
<dbReference type="InterPro" id="IPR042099">
    <property type="entry name" value="ANL_N_sf"/>
</dbReference>
<dbReference type="InterPro" id="IPR022272">
    <property type="entry name" value="Lipocalin_CS"/>
</dbReference>
<dbReference type="NCBIfam" id="NF006134">
    <property type="entry name" value="PRK08279.1"/>
    <property type="match status" value="1"/>
</dbReference>
<dbReference type="PANTHER" id="PTHR43107">
    <property type="entry name" value="LONG-CHAIN FATTY ACID TRANSPORT PROTEIN"/>
    <property type="match status" value="1"/>
</dbReference>
<dbReference type="PANTHER" id="PTHR43107:SF11">
    <property type="entry name" value="LONG-CHAIN FATTY ACID TRANSPORT PROTEIN 4"/>
    <property type="match status" value="1"/>
</dbReference>
<dbReference type="Pfam" id="PF00501">
    <property type="entry name" value="AMP-binding"/>
    <property type="match status" value="1"/>
</dbReference>
<dbReference type="Pfam" id="PF13193">
    <property type="entry name" value="AMP-binding_C"/>
    <property type="match status" value="1"/>
</dbReference>
<dbReference type="SUPFAM" id="SSF56801">
    <property type="entry name" value="Acetyl-CoA synthetase-like"/>
    <property type="match status" value="1"/>
</dbReference>
<dbReference type="PROSITE" id="PS00455">
    <property type="entry name" value="AMP_BINDING"/>
    <property type="match status" value="1"/>
</dbReference>
<accession>Q5RDY4</accession>
<comment type="function">
    <text evidence="1 2">Mediates the import of long-chain fatty acids (LCFA) into the cell by facilitating their transport across cell membranes. Appears to be the principal fatty acid transporter in small intestinal enterocytes. Also functions as an acyl-CoA ligase catalyzing the ATP-dependent formation of fatty acyl-CoA using LCFA and very-long-chain fatty acids (VLCFA) as substrates, which prevents fatty acid efflux from cells and might drive more fatty acid uptake (By similarity). Plays a role in the formation of the epidermal barrier. Required for fat absorption in early embryogenesis (By similarity). Probably involved in fatty acid transport across the blood barrier (By similarity). Indirectly inhibits RPE65 via substrate competition and via production of VLCFA derivatives like lignoceroyl-CoA. Prevents light-induced degeneration of rods and cones (By similarity).</text>
</comment>
<comment type="catalytic activity">
    <reaction evidence="2">
        <text>a fatty acid(in) = a fatty acid(out)</text>
        <dbReference type="Rhea" id="RHEA:38879"/>
        <dbReference type="ChEBI" id="CHEBI:28868"/>
    </reaction>
</comment>
<comment type="catalytic activity">
    <reaction evidence="1">
        <text>(9Z,12Z)-octadecadienoate(out) = (9Z,12Z)-octadecadienoate(in)</text>
        <dbReference type="Rhea" id="RHEA:45264"/>
        <dbReference type="ChEBI" id="CHEBI:30245"/>
    </reaction>
</comment>
<comment type="catalytic activity">
    <reaction evidence="1">
        <text>(9Z)-octadecenoate(out) = (9Z)-octadecenoate(in)</text>
        <dbReference type="Rhea" id="RHEA:33655"/>
        <dbReference type="ChEBI" id="CHEBI:30823"/>
    </reaction>
</comment>
<comment type="catalytic activity">
    <reaction evidence="1">
        <text>hexadecanoate(out) = hexadecanoate(in)</text>
        <dbReference type="Rhea" id="RHEA:45256"/>
        <dbReference type="ChEBI" id="CHEBI:7896"/>
    </reaction>
</comment>
<comment type="catalytic activity">
    <reaction evidence="1">
        <text>a long-chain fatty acid + ATP + CoA = a long-chain fatty acyl-CoA + AMP + diphosphate</text>
        <dbReference type="Rhea" id="RHEA:15421"/>
        <dbReference type="ChEBI" id="CHEBI:30616"/>
        <dbReference type="ChEBI" id="CHEBI:33019"/>
        <dbReference type="ChEBI" id="CHEBI:57287"/>
        <dbReference type="ChEBI" id="CHEBI:57560"/>
        <dbReference type="ChEBI" id="CHEBI:83139"/>
        <dbReference type="ChEBI" id="CHEBI:456215"/>
        <dbReference type="EC" id="6.2.1.3"/>
    </reaction>
    <physiologicalReaction direction="left-to-right" evidence="1">
        <dbReference type="Rhea" id="RHEA:15422"/>
    </physiologicalReaction>
</comment>
<comment type="catalytic activity">
    <reaction evidence="2">
        <text>(5Z,8Z,11Z,14Z)-eicosatetraenoate + ATP + CoA = (5Z,8Z,11Z,14Z)-eicosatetraenoyl-CoA + AMP + diphosphate</text>
        <dbReference type="Rhea" id="RHEA:19713"/>
        <dbReference type="ChEBI" id="CHEBI:30616"/>
        <dbReference type="ChEBI" id="CHEBI:32395"/>
        <dbReference type="ChEBI" id="CHEBI:33019"/>
        <dbReference type="ChEBI" id="CHEBI:57287"/>
        <dbReference type="ChEBI" id="CHEBI:57368"/>
        <dbReference type="ChEBI" id="CHEBI:456215"/>
        <dbReference type="EC" id="6.2.1.15"/>
    </reaction>
    <physiologicalReaction direction="left-to-right" evidence="2">
        <dbReference type="Rhea" id="RHEA:19714"/>
    </physiologicalReaction>
</comment>
<comment type="catalytic activity">
    <reaction evidence="2">
        <text>(9Z)-octadecenoate + ATP + CoA = (9Z)-octadecenoyl-CoA + AMP + diphosphate</text>
        <dbReference type="Rhea" id="RHEA:33607"/>
        <dbReference type="ChEBI" id="CHEBI:30616"/>
        <dbReference type="ChEBI" id="CHEBI:30823"/>
        <dbReference type="ChEBI" id="CHEBI:33019"/>
        <dbReference type="ChEBI" id="CHEBI:57287"/>
        <dbReference type="ChEBI" id="CHEBI:57387"/>
        <dbReference type="ChEBI" id="CHEBI:456215"/>
    </reaction>
    <physiologicalReaction direction="left-to-right" evidence="2">
        <dbReference type="Rhea" id="RHEA:33608"/>
    </physiologicalReaction>
</comment>
<comment type="catalytic activity">
    <reaction evidence="1">
        <text>hexadecanoate + ATP + CoA = hexadecanoyl-CoA + AMP + diphosphate</text>
        <dbReference type="Rhea" id="RHEA:30751"/>
        <dbReference type="ChEBI" id="CHEBI:7896"/>
        <dbReference type="ChEBI" id="CHEBI:30616"/>
        <dbReference type="ChEBI" id="CHEBI:33019"/>
        <dbReference type="ChEBI" id="CHEBI:57287"/>
        <dbReference type="ChEBI" id="CHEBI:57379"/>
        <dbReference type="ChEBI" id="CHEBI:456215"/>
    </reaction>
    <physiologicalReaction direction="left-to-right" evidence="1">
        <dbReference type="Rhea" id="RHEA:30752"/>
    </physiologicalReaction>
</comment>
<comment type="catalytic activity">
    <reaction evidence="1">
        <text>(E)-hexadec-2-enoate + ATP + CoA = (2E)-hexadecenoyl-CoA + AMP + diphosphate</text>
        <dbReference type="Rhea" id="RHEA:36139"/>
        <dbReference type="ChEBI" id="CHEBI:30616"/>
        <dbReference type="ChEBI" id="CHEBI:33019"/>
        <dbReference type="ChEBI" id="CHEBI:57287"/>
        <dbReference type="ChEBI" id="CHEBI:61526"/>
        <dbReference type="ChEBI" id="CHEBI:72745"/>
        <dbReference type="ChEBI" id="CHEBI:456215"/>
    </reaction>
    <physiologicalReaction direction="left-to-right" evidence="1">
        <dbReference type="Rhea" id="RHEA:36140"/>
    </physiologicalReaction>
</comment>
<comment type="catalytic activity">
    <reaction evidence="2">
        <text>a very long-chain fatty acid + ATP + CoA = a very long-chain fatty acyl-CoA + AMP + diphosphate</text>
        <dbReference type="Rhea" id="RHEA:54536"/>
        <dbReference type="ChEBI" id="CHEBI:30616"/>
        <dbReference type="ChEBI" id="CHEBI:33019"/>
        <dbReference type="ChEBI" id="CHEBI:57287"/>
        <dbReference type="ChEBI" id="CHEBI:58950"/>
        <dbReference type="ChEBI" id="CHEBI:138261"/>
        <dbReference type="ChEBI" id="CHEBI:456215"/>
    </reaction>
    <physiologicalReaction direction="left-to-right" evidence="2">
        <dbReference type="Rhea" id="RHEA:54537"/>
    </physiologicalReaction>
</comment>
<comment type="catalytic activity">
    <reaction evidence="2">
        <text>tetracosanoate + ATP + CoA = tetracosanoyl-CoA + AMP + diphosphate</text>
        <dbReference type="Rhea" id="RHEA:33639"/>
        <dbReference type="ChEBI" id="CHEBI:30616"/>
        <dbReference type="ChEBI" id="CHEBI:31014"/>
        <dbReference type="ChEBI" id="CHEBI:33019"/>
        <dbReference type="ChEBI" id="CHEBI:57287"/>
        <dbReference type="ChEBI" id="CHEBI:65052"/>
        <dbReference type="ChEBI" id="CHEBI:456215"/>
    </reaction>
    <physiologicalReaction direction="left-to-right" evidence="2">
        <dbReference type="Rhea" id="RHEA:33640"/>
    </physiologicalReaction>
</comment>
<comment type="subcellular location">
    <subcellularLocation>
        <location evidence="2">Endoplasmic reticulum membrane</location>
        <topology evidence="3">Multi-pass membrane protein</topology>
    </subcellularLocation>
</comment>
<comment type="similarity">
    <text evidence="4">Belongs to the ATP-dependent AMP-binding enzyme family.</text>
</comment>
<protein>
    <recommendedName>
        <fullName>Long-chain fatty acid transport protein 4</fullName>
        <shortName>FATP-4</shortName>
        <shortName>Fatty acid transport protein 4</shortName>
    </recommendedName>
    <alternativeName>
        <fullName>Arachidonate--CoA ligase</fullName>
        <ecNumber>6.2.1.15</ecNumber>
    </alternativeName>
    <alternativeName>
        <fullName>Long-chain-fatty-acid--CoA ligase</fullName>
        <ecNumber>6.2.1.3</ecNumber>
    </alternativeName>
    <alternativeName>
        <fullName>Solute carrier family 27 member 4</fullName>
    </alternativeName>
    <alternativeName>
        <fullName>Very long-chain acyl-CoA synthetase 4</fullName>
        <shortName>ACSVL4</shortName>
        <ecNumber>6.2.1.-</ecNumber>
    </alternativeName>
</protein>
<gene>
    <name type="primary">SLC27A4</name>
    <name type="synonym">FATP4</name>
</gene>